<feature type="chain" id="PRO_1000098130" description="Serine--tRNA ligase">
    <location>
        <begin position="1"/>
        <end position="424"/>
    </location>
</feature>
<feature type="binding site" evidence="1">
    <location>
        <begin position="230"/>
        <end position="232"/>
    </location>
    <ligand>
        <name>L-serine</name>
        <dbReference type="ChEBI" id="CHEBI:33384"/>
    </ligand>
</feature>
<feature type="binding site" evidence="1">
    <location>
        <begin position="261"/>
        <end position="263"/>
    </location>
    <ligand>
        <name>ATP</name>
        <dbReference type="ChEBI" id="CHEBI:30616"/>
    </ligand>
</feature>
<feature type="binding site" evidence="1">
    <location>
        <position position="284"/>
    </location>
    <ligand>
        <name>L-serine</name>
        <dbReference type="ChEBI" id="CHEBI:33384"/>
    </ligand>
</feature>
<feature type="binding site" evidence="1">
    <location>
        <begin position="348"/>
        <end position="351"/>
    </location>
    <ligand>
        <name>ATP</name>
        <dbReference type="ChEBI" id="CHEBI:30616"/>
    </ligand>
</feature>
<feature type="binding site" evidence="1">
    <location>
        <position position="384"/>
    </location>
    <ligand>
        <name>L-serine</name>
        <dbReference type="ChEBI" id="CHEBI:33384"/>
    </ligand>
</feature>
<evidence type="ECO:0000255" key="1">
    <source>
        <dbReference type="HAMAP-Rule" id="MF_00176"/>
    </source>
</evidence>
<proteinExistence type="inferred from homology"/>
<reference key="1">
    <citation type="journal article" date="2001" name="Microb. Drug Resist.">
        <title>Annotated draft genomic sequence from a Streptococcus pneumoniae type 19F clinical isolate.</title>
        <authorList>
            <person name="Dopazo J."/>
            <person name="Mendoza A."/>
            <person name="Herrero J."/>
            <person name="Caldara F."/>
            <person name="Humbert Y."/>
            <person name="Friedli L."/>
            <person name="Guerrier M."/>
            <person name="Grand-Schenk E."/>
            <person name="Gandin C."/>
            <person name="de Francesco M."/>
            <person name="Polissi A."/>
            <person name="Buell G."/>
            <person name="Feger G."/>
            <person name="Garcia E."/>
            <person name="Peitsch M."/>
            <person name="Garcia-Bustos J.F."/>
        </authorList>
    </citation>
    <scope>NUCLEOTIDE SEQUENCE [LARGE SCALE GENOMIC DNA]</scope>
    <source>
        <strain>G54</strain>
    </source>
</reference>
<reference key="2">
    <citation type="submission" date="2008-03" db="EMBL/GenBank/DDBJ databases">
        <title>Pneumococcal beta glucoside metabolism investigated by whole genome comparison.</title>
        <authorList>
            <person name="Mulas L."/>
            <person name="Trappetti C."/>
            <person name="Hakenbeck R."/>
            <person name="Iannelli F."/>
            <person name="Pozzi G."/>
            <person name="Davidsen T.M."/>
            <person name="Tettelin H."/>
            <person name="Oggioni M."/>
        </authorList>
    </citation>
    <scope>NUCLEOTIDE SEQUENCE [LARGE SCALE GENOMIC DNA]</scope>
    <source>
        <strain>G54</strain>
    </source>
</reference>
<sequence>MLDIKRIRTDFEAVAEKLATRGVDAAVLNEMKEIDAKRRNILIKVETLKAERNTVSAEIAQAKRNKENTDDKIAAMQNLSAEVKALDAELAEIDAKLTEFTTTLPNIPADSVPVGADXXXNVEVRRWGTPREFDFEPKAHWDLGEDLGILDWERGGKVTGARFLFYKGLGARLERAIYNFMLDEHGKEGYTEVITPYIVNHDSMFGTGQYPKFKEDTFELSDTNFVLIPTAEVPLTNYYRDEILDGKDLPIYFTAMSPSFRSEAGSAGRDTRGLIRLHQFHKVEMVKFAKPEESYEELEKMTANAENILQKLNLPYRVVALSTGDMGFSATKTYDLEVWIPAQNNYREISSCSNTEDFQARRAQIRYRDEADGKVKLLHTLNGSGLAVGRTVAAILENYQNEDGSVTIPEALRPYMGGAEVIKP</sequence>
<gene>
    <name evidence="1" type="primary">serS</name>
    <name type="ordered locus">SPG_0377</name>
</gene>
<organism>
    <name type="scientific">Streptococcus pneumoniae serotype 19F (strain G54)</name>
    <dbReference type="NCBI Taxonomy" id="512566"/>
    <lineage>
        <taxon>Bacteria</taxon>
        <taxon>Bacillati</taxon>
        <taxon>Bacillota</taxon>
        <taxon>Bacilli</taxon>
        <taxon>Lactobacillales</taxon>
        <taxon>Streptococcaceae</taxon>
        <taxon>Streptococcus</taxon>
    </lineage>
</organism>
<comment type="function">
    <text evidence="1">Catalyzes the attachment of serine to tRNA(Ser). Is also able to aminoacylate tRNA(Sec) with serine, to form the misacylated tRNA L-seryl-tRNA(Sec), which will be further converted into selenocysteinyl-tRNA(Sec).</text>
</comment>
<comment type="catalytic activity">
    <reaction evidence="1">
        <text>tRNA(Ser) + L-serine + ATP = L-seryl-tRNA(Ser) + AMP + diphosphate + H(+)</text>
        <dbReference type="Rhea" id="RHEA:12292"/>
        <dbReference type="Rhea" id="RHEA-COMP:9669"/>
        <dbReference type="Rhea" id="RHEA-COMP:9703"/>
        <dbReference type="ChEBI" id="CHEBI:15378"/>
        <dbReference type="ChEBI" id="CHEBI:30616"/>
        <dbReference type="ChEBI" id="CHEBI:33019"/>
        <dbReference type="ChEBI" id="CHEBI:33384"/>
        <dbReference type="ChEBI" id="CHEBI:78442"/>
        <dbReference type="ChEBI" id="CHEBI:78533"/>
        <dbReference type="ChEBI" id="CHEBI:456215"/>
        <dbReference type="EC" id="6.1.1.11"/>
    </reaction>
</comment>
<comment type="catalytic activity">
    <reaction evidence="1">
        <text>tRNA(Sec) + L-serine + ATP = L-seryl-tRNA(Sec) + AMP + diphosphate + H(+)</text>
        <dbReference type="Rhea" id="RHEA:42580"/>
        <dbReference type="Rhea" id="RHEA-COMP:9742"/>
        <dbReference type="Rhea" id="RHEA-COMP:10128"/>
        <dbReference type="ChEBI" id="CHEBI:15378"/>
        <dbReference type="ChEBI" id="CHEBI:30616"/>
        <dbReference type="ChEBI" id="CHEBI:33019"/>
        <dbReference type="ChEBI" id="CHEBI:33384"/>
        <dbReference type="ChEBI" id="CHEBI:78442"/>
        <dbReference type="ChEBI" id="CHEBI:78533"/>
        <dbReference type="ChEBI" id="CHEBI:456215"/>
        <dbReference type="EC" id="6.1.1.11"/>
    </reaction>
</comment>
<comment type="pathway">
    <text evidence="1">Aminoacyl-tRNA biosynthesis; selenocysteinyl-tRNA(Sec) biosynthesis; L-seryl-tRNA(Sec) from L-serine and tRNA(Sec): step 1/1.</text>
</comment>
<comment type="subunit">
    <text evidence="1">Homodimer. The tRNA molecule binds across the dimer.</text>
</comment>
<comment type="subcellular location">
    <subcellularLocation>
        <location evidence="1">Cytoplasm</location>
    </subcellularLocation>
</comment>
<comment type="domain">
    <text evidence="1">Consists of two distinct domains, a catalytic core and a N-terminal extension that is involved in tRNA binding.</text>
</comment>
<comment type="similarity">
    <text evidence="1">Belongs to the class-II aminoacyl-tRNA synthetase family. Type-1 seryl-tRNA synthetase subfamily.</text>
</comment>
<name>SYS_STRP4</name>
<protein>
    <recommendedName>
        <fullName evidence="1">Serine--tRNA ligase</fullName>
        <ecNumber evidence="1">6.1.1.11</ecNumber>
    </recommendedName>
    <alternativeName>
        <fullName evidence="1">Seryl-tRNA synthetase</fullName>
        <shortName evidence="1">SerRS</shortName>
    </alternativeName>
    <alternativeName>
        <fullName evidence="1">Seryl-tRNA(Ser/Sec) synthetase</fullName>
    </alternativeName>
</protein>
<accession>B5E7F2</accession>
<keyword id="KW-0030">Aminoacyl-tRNA synthetase</keyword>
<keyword id="KW-0067">ATP-binding</keyword>
<keyword id="KW-0963">Cytoplasm</keyword>
<keyword id="KW-0436">Ligase</keyword>
<keyword id="KW-0547">Nucleotide-binding</keyword>
<keyword id="KW-0648">Protein biosynthesis</keyword>
<dbReference type="EC" id="6.1.1.11" evidence="1"/>
<dbReference type="EMBL" id="CP001015">
    <property type="protein sequence ID" value="ACF55879.1"/>
    <property type="molecule type" value="Genomic_DNA"/>
</dbReference>
<dbReference type="KEGG" id="spx:SPG_0377"/>
<dbReference type="HOGENOM" id="CLU_023797_1_1_9"/>
<dbReference type="UniPathway" id="UPA00906">
    <property type="reaction ID" value="UER00895"/>
</dbReference>
<dbReference type="GO" id="GO:0005737">
    <property type="term" value="C:cytoplasm"/>
    <property type="evidence" value="ECO:0007669"/>
    <property type="project" value="UniProtKB-SubCell"/>
</dbReference>
<dbReference type="GO" id="GO:0005524">
    <property type="term" value="F:ATP binding"/>
    <property type="evidence" value="ECO:0007669"/>
    <property type="project" value="UniProtKB-UniRule"/>
</dbReference>
<dbReference type="GO" id="GO:0140096">
    <property type="term" value="F:catalytic activity, acting on a protein"/>
    <property type="evidence" value="ECO:0007669"/>
    <property type="project" value="UniProtKB-ARBA"/>
</dbReference>
<dbReference type="GO" id="GO:0004828">
    <property type="term" value="F:serine-tRNA ligase activity"/>
    <property type="evidence" value="ECO:0007669"/>
    <property type="project" value="UniProtKB-UniRule"/>
</dbReference>
<dbReference type="GO" id="GO:0016740">
    <property type="term" value="F:transferase activity"/>
    <property type="evidence" value="ECO:0007669"/>
    <property type="project" value="UniProtKB-ARBA"/>
</dbReference>
<dbReference type="GO" id="GO:0016260">
    <property type="term" value="P:selenocysteine biosynthetic process"/>
    <property type="evidence" value="ECO:0007669"/>
    <property type="project" value="UniProtKB-UniRule"/>
</dbReference>
<dbReference type="GO" id="GO:0006434">
    <property type="term" value="P:seryl-tRNA aminoacylation"/>
    <property type="evidence" value="ECO:0007669"/>
    <property type="project" value="UniProtKB-UniRule"/>
</dbReference>
<dbReference type="CDD" id="cd00770">
    <property type="entry name" value="SerRS_core"/>
    <property type="match status" value="1"/>
</dbReference>
<dbReference type="Gene3D" id="3.30.930.10">
    <property type="entry name" value="Bira Bifunctional Protein, Domain 2"/>
    <property type="match status" value="1"/>
</dbReference>
<dbReference type="Gene3D" id="1.10.287.40">
    <property type="entry name" value="Serine-tRNA synthetase, tRNA binding domain"/>
    <property type="match status" value="1"/>
</dbReference>
<dbReference type="HAMAP" id="MF_00176">
    <property type="entry name" value="Ser_tRNA_synth_type1"/>
    <property type="match status" value="1"/>
</dbReference>
<dbReference type="InterPro" id="IPR002314">
    <property type="entry name" value="aa-tRNA-synt_IIb"/>
</dbReference>
<dbReference type="InterPro" id="IPR006195">
    <property type="entry name" value="aa-tRNA-synth_II"/>
</dbReference>
<dbReference type="InterPro" id="IPR045864">
    <property type="entry name" value="aa-tRNA-synth_II/BPL/LPL"/>
</dbReference>
<dbReference type="InterPro" id="IPR002317">
    <property type="entry name" value="Ser-tRNA-ligase_type_1"/>
</dbReference>
<dbReference type="InterPro" id="IPR015866">
    <property type="entry name" value="Ser-tRNA-synth_1_N"/>
</dbReference>
<dbReference type="InterPro" id="IPR042103">
    <property type="entry name" value="SerRS_1_N_sf"/>
</dbReference>
<dbReference type="InterPro" id="IPR033729">
    <property type="entry name" value="SerRS_core"/>
</dbReference>
<dbReference type="InterPro" id="IPR010978">
    <property type="entry name" value="tRNA-bd_arm"/>
</dbReference>
<dbReference type="NCBIfam" id="TIGR00414">
    <property type="entry name" value="serS"/>
    <property type="match status" value="1"/>
</dbReference>
<dbReference type="PANTHER" id="PTHR43697:SF1">
    <property type="entry name" value="SERINE--TRNA LIGASE"/>
    <property type="match status" value="1"/>
</dbReference>
<dbReference type="PANTHER" id="PTHR43697">
    <property type="entry name" value="SERYL-TRNA SYNTHETASE"/>
    <property type="match status" value="1"/>
</dbReference>
<dbReference type="Pfam" id="PF02403">
    <property type="entry name" value="Seryl_tRNA_N"/>
    <property type="match status" value="1"/>
</dbReference>
<dbReference type="Pfam" id="PF00587">
    <property type="entry name" value="tRNA-synt_2b"/>
    <property type="match status" value="1"/>
</dbReference>
<dbReference type="PIRSF" id="PIRSF001529">
    <property type="entry name" value="Ser-tRNA-synth_IIa"/>
    <property type="match status" value="1"/>
</dbReference>
<dbReference type="PRINTS" id="PR00981">
    <property type="entry name" value="TRNASYNTHSER"/>
</dbReference>
<dbReference type="SUPFAM" id="SSF55681">
    <property type="entry name" value="Class II aaRS and biotin synthetases"/>
    <property type="match status" value="1"/>
</dbReference>
<dbReference type="SUPFAM" id="SSF46589">
    <property type="entry name" value="tRNA-binding arm"/>
    <property type="match status" value="1"/>
</dbReference>
<dbReference type="PROSITE" id="PS50862">
    <property type="entry name" value="AA_TRNA_LIGASE_II"/>
    <property type="match status" value="1"/>
</dbReference>